<feature type="chain" id="PRO_0000214073" description="Putative quercetin 2,3-dioxygenase VC_A0969">
    <location>
        <begin position="1"/>
        <end position="282"/>
    </location>
</feature>
<feature type="region of interest" description="Disordered" evidence="2">
    <location>
        <begin position="1"/>
        <end position="21"/>
    </location>
</feature>
<feature type="binding site" evidence="1">
    <location>
        <position position="59"/>
    </location>
    <ligand>
        <name>a divalent metal cation</name>
        <dbReference type="ChEBI" id="CHEBI:60240"/>
    </ligand>
</feature>
<feature type="binding site" evidence="1">
    <location>
        <position position="61"/>
    </location>
    <ligand>
        <name>a divalent metal cation</name>
        <dbReference type="ChEBI" id="CHEBI:60240"/>
    </ligand>
</feature>
<feature type="binding site" evidence="1">
    <location>
        <position position="103"/>
    </location>
    <ligand>
        <name>a divalent metal cation</name>
        <dbReference type="ChEBI" id="CHEBI:60240"/>
    </ligand>
</feature>
<feature type="binding site" evidence="1">
    <location>
        <position position="105"/>
    </location>
    <ligand>
        <name>a divalent metal cation</name>
        <dbReference type="ChEBI" id="CHEBI:60240"/>
    </ligand>
</feature>
<sequence>MTKDREIRQTVPAQPTSDGDGVKIQRIAGFQRPNFSPFLMLDELKADSQADYIGGFPPHPHRGIETLTYMLQGHFQHRDQMGNVGELRSGGAQWMAAGHGVIHSEMPIMQEGQLHGFQIWINQPARNKMSPAKYQDFQPESIVERHHPQQGLLRVIAGSVEVEDQTITGPLTDTGVPATVVDWRAEAGQDISINTPPHFNAMLYVYRGSLNVGKQSVKTGHMAMLTAGEQLTLRAEQPCGSLLLMGQPIDEPVVHYGPFVMNSMAEIEQAIRDYNAGHFETY</sequence>
<proteinExistence type="inferred from homology"/>
<comment type="function">
    <text evidence="1">Putative quercetin 2,3-dioxygenase.</text>
</comment>
<comment type="catalytic activity">
    <reaction>
        <text>quercetin + O2 = 2-(3,4-dihydroxybenzoyloxy)-4,6-dihydroxybenzoate + CO</text>
        <dbReference type="Rhea" id="RHEA:15381"/>
        <dbReference type="ChEBI" id="CHEBI:15379"/>
        <dbReference type="ChEBI" id="CHEBI:17245"/>
        <dbReference type="ChEBI" id="CHEBI:57628"/>
        <dbReference type="ChEBI" id="CHEBI:57694"/>
        <dbReference type="EC" id="1.13.11.24"/>
    </reaction>
</comment>
<comment type="cofactor">
    <cofactor evidence="1">
        <name>a divalent metal cation</name>
        <dbReference type="ChEBI" id="CHEBI:60240"/>
    </cofactor>
    <text evidence="1">Binds 1 divalent metal cation.</text>
</comment>
<comment type="pathway">
    <text>Flavonoid metabolism; quercetin degradation.</text>
</comment>
<comment type="similarity">
    <text evidence="3">Belongs to the pirin family.</text>
</comment>
<reference key="1">
    <citation type="journal article" date="2000" name="Nature">
        <title>DNA sequence of both chromosomes of the cholera pathogen Vibrio cholerae.</title>
        <authorList>
            <person name="Heidelberg J.F."/>
            <person name="Eisen J.A."/>
            <person name="Nelson W.C."/>
            <person name="Clayton R.A."/>
            <person name="Gwinn M.L."/>
            <person name="Dodson R.J."/>
            <person name="Haft D.H."/>
            <person name="Hickey E.K."/>
            <person name="Peterson J.D."/>
            <person name="Umayam L.A."/>
            <person name="Gill S.R."/>
            <person name="Nelson K.E."/>
            <person name="Read T.D."/>
            <person name="Tettelin H."/>
            <person name="Richardson D.L."/>
            <person name="Ermolaeva M.D."/>
            <person name="Vamathevan J.J."/>
            <person name="Bass S."/>
            <person name="Qin H."/>
            <person name="Dragoi I."/>
            <person name="Sellers P."/>
            <person name="McDonald L.A."/>
            <person name="Utterback T.R."/>
            <person name="Fleischmann R.D."/>
            <person name="Nierman W.C."/>
            <person name="White O."/>
            <person name="Salzberg S.L."/>
            <person name="Smith H.O."/>
            <person name="Colwell R.R."/>
            <person name="Mekalanos J.J."/>
            <person name="Venter J.C."/>
            <person name="Fraser C.M."/>
        </authorList>
    </citation>
    <scope>NUCLEOTIDE SEQUENCE [LARGE SCALE GENOMIC DNA]</scope>
    <source>
        <strain>ATCC 39315 / El Tor Inaba N16961</strain>
    </source>
</reference>
<evidence type="ECO:0000250" key="1"/>
<evidence type="ECO:0000256" key="2">
    <source>
        <dbReference type="SAM" id="MobiDB-lite"/>
    </source>
</evidence>
<evidence type="ECO:0000305" key="3"/>
<name>Y3769_VIBCH</name>
<accession>Q9KKY1</accession>
<dbReference type="EC" id="1.13.11.24"/>
<dbReference type="EMBL" id="AE003853">
    <property type="protein sequence ID" value="AAF96865.1"/>
    <property type="molecule type" value="Genomic_DNA"/>
</dbReference>
<dbReference type="PIR" id="H82394">
    <property type="entry name" value="H82394"/>
</dbReference>
<dbReference type="RefSeq" id="NP_233353.1">
    <property type="nucleotide sequence ID" value="NC_002506.1"/>
</dbReference>
<dbReference type="RefSeq" id="WP_000159137.1">
    <property type="nucleotide sequence ID" value="NZ_LT906615.1"/>
</dbReference>
<dbReference type="SMR" id="Q9KKY1"/>
<dbReference type="STRING" id="243277.VC_A0969"/>
<dbReference type="DNASU" id="2612679"/>
<dbReference type="EnsemblBacteria" id="AAF96865">
    <property type="protein sequence ID" value="AAF96865"/>
    <property type="gene ID" value="VC_A0969"/>
</dbReference>
<dbReference type="KEGG" id="vch:VC_A0969"/>
<dbReference type="PATRIC" id="fig|243277.26.peg.3577"/>
<dbReference type="eggNOG" id="COG1741">
    <property type="taxonomic scope" value="Bacteria"/>
</dbReference>
<dbReference type="HOGENOM" id="CLU_045717_5_0_6"/>
<dbReference type="UniPathway" id="UPA00724"/>
<dbReference type="Proteomes" id="UP000000584">
    <property type="component" value="Chromosome 2"/>
</dbReference>
<dbReference type="GO" id="GO:0046872">
    <property type="term" value="F:metal ion binding"/>
    <property type="evidence" value="ECO:0007669"/>
    <property type="project" value="UniProtKB-KW"/>
</dbReference>
<dbReference type="GO" id="GO:0008127">
    <property type="term" value="F:quercetin 2,3-dioxygenase activity"/>
    <property type="evidence" value="ECO:0007669"/>
    <property type="project" value="UniProtKB-EC"/>
</dbReference>
<dbReference type="CDD" id="cd02247">
    <property type="entry name" value="cupin_pirin_C"/>
    <property type="match status" value="1"/>
</dbReference>
<dbReference type="CDD" id="cd02909">
    <property type="entry name" value="cupin_pirin_N"/>
    <property type="match status" value="1"/>
</dbReference>
<dbReference type="Gene3D" id="2.60.120.10">
    <property type="entry name" value="Jelly Rolls"/>
    <property type="match status" value="2"/>
</dbReference>
<dbReference type="InterPro" id="IPR012093">
    <property type="entry name" value="Pirin"/>
</dbReference>
<dbReference type="InterPro" id="IPR008778">
    <property type="entry name" value="Pirin_C_dom"/>
</dbReference>
<dbReference type="InterPro" id="IPR003829">
    <property type="entry name" value="Pirin_N_dom"/>
</dbReference>
<dbReference type="InterPro" id="IPR014710">
    <property type="entry name" value="RmlC-like_jellyroll"/>
</dbReference>
<dbReference type="InterPro" id="IPR011051">
    <property type="entry name" value="RmlC_Cupin_sf"/>
</dbReference>
<dbReference type="PANTHER" id="PTHR13903:SF8">
    <property type="entry name" value="PIRIN"/>
    <property type="match status" value="1"/>
</dbReference>
<dbReference type="PANTHER" id="PTHR13903">
    <property type="entry name" value="PIRIN-RELATED"/>
    <property type="match status" value="1"/>
</dbReference>
<dbReference type="Pfam" id="PF02678">
    <property type="entry name" value="Pirin"/>
    <property type="match status" value="1"/>
</dbReference>
<dbReference type="Pfam" id="PF05726">
    <property type="entry name" value="Pirin_C"/>
    <property type="match status" value="1"/>
</dbReference>
<dbReference type="PIRSF" id="PIRSF006232">
    <property type="entry name" value="Pirin"/>
    <property type="match status" value="1"/>
</dbReference>
<dbReference type="SUPFAM" id="SSF51182">
    <property type="entry name" value="RmlC-like cupins"/>
    <property type="match status" value="1"/>
</dbReference>
<organism>
    <name type="scientific">Vibrio cholerae serotype O1 (strain ATCC 39315 / El Tor Inaba N16961)</name>
    <dbReference type="NCBI Taxonomy" id="243277"/>
    <lineage>
        <taxon>Bacteria</taxon>
        <taxon>Pseudomonadati</taxon>
        <taxon>Pseudomonadota</taxon>
        <taxon>Gammaproteobacteria</taxon>
        <taxon>Vibrionales</taxon>
        <taxon>Vibrionaceae</taxon>
        <taxon>Vibrio</taxon>
    </lineage>
</organism>
<protein>
    <recommendedName>
        <fullName>Putative quercetin 2,3-dioxygenase VC_A0969</fullName>
        <shortName>Putative quercetinase</shortName>
        <ecNumber>1.13.11.24</ecNumber>
    </recommendedName>
    <alternativeName>
        <fullName>Pirin-like protein VC_A0969</fullName>
    </alternativeName>
</protein>
<keyword id="KW-0223">Dioxygenase</keyword>
<keyword id="KW-0479">Metal-binding</keyword>
<keyword id="KW-0560">Oxidoreductase</keyword>
<keyword id="KW-1185">Reference proteome</keyword>
<gene>
    <name type="ordered locus">VC_A0969</name>
</gene>